<reference key="1">
    <citation type="submission" date="2008-06" db="EMBL/GenBank/DDBJ databases">
        <title>Complete sequence of chromosome of Prosthecochloris aestuarii DSM 271.</title>
        <authorList>
            <consortium name="US DOE Joint Genome Institute"/>
            <person name="Lucas S."/>
            <person name="Copeland A."/>
            <person name="Lapidus A."/>
            <person name="Glavina del Rio T."/>
            <person name="Dalin E."/>
            <person name="Tice H."/>
            <person name="Bruce D."/>
            <person name="Goodwin L."/>
            <person name="Pitluck S."/>
            <person name="Schmutz J."/>
            <person name="Larimer F."/>
            <person name="Land M."/>
            <person name="Hauser L."/>
            <person name="Kyrpides N."/>
            <person name="Anderson I."/>
            <person name="Liu Z."/>
            <person name="Li T."/>
            <person name="Zhao F."/>
            <person name="Overmann J."/>
            <person name="Bryant D.A."/>
            <person name="Richardson P."/>
        </authorList>
    </citation>
    <scope>NUCLEOTIDE SEQUENCE [LARGE SCALE GENOMIC DNA]</scope>
    <source>
        <strain>DSM 271 / SK 413</strain>
    </source>
</reference>
<accession>B4S3H9</accession>
<comment type="catalytic activity">
    <reaction evidence="1">
        <text>(6R)-10-formyltetrahydrofolate + 5-amino-1-(5-phospho-beta-D-ribosyl)imidazole-4-carboxamide = 5-formamido-1-(5-phospho-D-ribosyl)imidazole-4-carboxamide + (6S)-5,6,7,8-tetrahydrofolate</text>
        <dbReference type="Rhea" id="RHEA:22192"/>
        <dbReference type="ChEBI" id="CHEBI:57453"/>
        <dbReference type="ChEBI" id="CHEBI:58467"/>
        <dbReference type="ChEBI" id="CHEBI:58475"/>
        <dbReference type="ChEBI" id="CHEBI:195366"/>
        <dbReference type="EC" id="2.1.2.3"/>
    </reaction>
</comment>
<comment type="catalytic activity">
    <reaction evidence="1">
        <text>IMP + H2O = 5-formamido-1-(5-phospho-D-ribosyl)imidazole-4-carboxamide</text>
        <dbReference type="Rhea" id="RHEA:18445"/>
        <dbReference type="ChEBI" id="CHEBI:15377"/>
        <dbReference type="ChEBI" id="CHEBI:58053"/>
        <dbReference type="ChEBI" id="CHEBI:58467"/>
        <dbReference type="EC" id="3.5.4.10"/>
    </reaction>
</comment>
<comment type="pathway">
    <text evidence="1">Purine metabolism; IMP biosynthesis via de novo pathway; 5-formamido-1-(5-phospho-D-ribosyl)imidazole-4-carboxamide from 5-amino-1-(5-phospho-D-ribosyl)imidazole-4-carboxamide (10-formyl THF route): step 1/1.</text>
</comment>
<comment type="pathway">
    <text evidence="1">Purine metabolism; IMP biosynthesis via de novo pathway; IMP from 5-formamido-1-(5-phospho-D-ribosyl)imidazole-4-carboxamide: step 1/1.</text>
</comment>
<comment type="domain">
    <text evidence="1">The IMP cyclohydrolase activity resides in the N-terminal region.</text>
</comment>
<comment type="similarity">
    <text evidence="1">Belongs to the PurH family.</text>
</comment>
<organism>
    <name type="scientific">Prosthecochloris aestuarii (strain DSM 271 / SK 413)</name>
    <dbReference type="NCBI Taxonomy" id="290512"/>
    <lineage>
        <taxon>Bacteria</taxon>
        <taxon>Pseudomonadati</taxon>
        <taxon>Chlorobiota</taxon>
        <taxon>Chlorobiia</taxon>
        <taxon>Chlorobiales</taxon>
        <taxon>Chlorobiaceae</taxon>
        <taxon>Prosthecochloris</taxon>
    </lineage>
</organism>
<gene>
    <name evidence="1" type="primary">purH</name>
    <name type="ordered locus">Paes_1700</name>
</gene>
<dbReference type="EC" id="2.1.2.3" evidence="1"/>
<dbReference type="EC" id="3.5.4.10" evidence="1"/>
<dbReference type="EMBL" id="CP001108">
    <property type="protein sequence ID" value="ACF46718.1"/>
    <property type="molecule type" value="Genomic_DNA"/>
</dbReference>
<dbReference type="RefSeq" id="WP_012506251.1">
    <property type="nucleotide sequence ID" value="NC_011059.1"/>
</dbReference>
<dbReference type="SMR" id="B4S3H9"/>
<dbReference type="STRING" id="290512.Paes_1700"/>
<dbReference type="KEGG" id="paa:Paes_1700"/>
<dbReference type="eggNOG" id="COG0138">
    <property type="taxonomic scope" value="Bacteria"/>
</dbReference>
<dbReference type="HOGENOM" id="CLU_016316_5_2_10"/>
<dbReference type="UniPathway" id="UPA00074">
    <property type="reaction ID" value="UER00133"/>
</dbReference>
<dbReference type="UniPathway" id="UPA00074">
    <property type="reaction ID" value="UER00135"/>
</dbReference>
<dbReference type="Proteomes" id="UP000002725">
    <property type="component" value="Chromosome"/>
</dbReference>
<dbReference type="GO" id="GO:0005829">
    <property type="term" value="C:cytosol"/>
    <property type="evidence" value="ECO:0007669"/>
    <property type="project" value="TreeGrafter"/>
</dbReference>
<dbReference type="GO" id="GO:0003937">
    <property type="term" value="F:IMP cyclohydrolase activity"/>
    <property type="evidence" value="ECO:0007669"/>
    <property type="project" value="UniProtKB-UniRule"/>
</dbReference>
<dbReference type="GO" id="GO:0004643">
    <property type="term" value="F:phosphoribosylaminoimidazolecarboxamide formyltransferase activity"/>
    <property type="evidence" value="ECO:0007669"/>
    <property type="project" value="UniProtKB-UniRule"/>
</dbReference>
<dbReference type="GO" id="GO:0006189">
    <property type="term" value="P:'de novo' IMP biosynthetic process"/>
    <property type="evidence" value="ECO:0007669"/>
    <property type="project" value="UniProtKB-UniRule"/>
</dbReference>
<dbReference type="CDD" id="cd01421">
    <property type="entry name" value="IMPCH"/>
    <property type="match status" value="1"/>
</dbReference>
<dbReference type="FunFam" id="3.40.140.20:FF:000001">
    <property type="entry name" value="Bifunctional purine biosynthesis protein PurH"/>
    <property type="match status" value="1"/>
</dbReference>
<dbReference type="FunFam" id="3.40.50.1380:FF:000001">
    <property type="entry name" value="Bifunctional purine biosynthesis protein PurH"/>
    <property type="match status" value="1"/>
</dbReference>
<dbReference type="Gene3D" id="3.40.140.20">
    <property type="match status" value="2"/>
</dbReference>
<dbReference type="Gene3D" id="3.40.50.1380">
    <property type="entry name" value="Methylglyoxal synthase-like domain"/>
    <property type="match status" value="1"/>
</dbReference>
<dbReference type="HAMAP" id="MF_00139">
    <property type="entry name" value="PurH"/>
    <property type="match status" value="1"/>
</dbReference>
<dbReference type="InterPro" id="IPR024051">
    <property type="entry name" value="AICAR_Tfase_dup_dom_sf"/>
</dbReference>
<dbReference type="InterPro" id="IPR016193">
    <property type="entry name" value="Cytidine_deaminase-like"/>
</dbReference>
<dbReference type="InterPro" id="IPR011607">
    <property type="entry name" value="MGS-like_dom"/>
</dbReference>
<dbReference type="InterPro" id="IPR036914">
    <property type="entry name" value="MGS-like_dom_sf"/>
</dbReference>
<dbReference type="InterPro" id="IPR002695">
    <property type="entry name" value="PurH-like"/>
</dbReference>
<dbReference type="NCBIfam" id="NF002049">
    <property type="entry name" value="PRK00881.1"/>
    <property type="match status" value="1"/>
</dbReference>
<dbReference type="NCBIfam" id="TIGR00355">
    <property type="entry name" value="purH"/>
    <property type="match status" value="1"/>
</dbReference>
<dbReference type="PANTHER" id="PTHR11692:SF0">
    <property type="entry name" value="BIFUNCTIONAL PURINE BIOSYNTHESIS PROTEIN ATIC"/>
    <property type="match status" value="1"/>
</dbReference>
<dbReference type="PANTHER" id="PTHR11692">
    <property type="entry name" value="BIFUNCTIONAL PURINE BIOSYNTHESIS PROTEIN PURH"/>
    <property type="match status" value="1"/>
</dbReference>
<dbReference type="Pfam" id="PF01808">
    <property type="entry name" value="AICARFT_IMPCHas"/>
    <property type="match status" value="1"/>
</dbReference>
<dbReference type="Pfam" id="PF02142">
    <property type="entry name" value="MGS"/>
    <property type="match status" value="1"/>
</dbReference>
<dbReference type="PIRSF" id="PIRSF000414">
    <property type="entry name" value="AICARFT_IMPCHas"/>
    <property type="match status" value="1"/>
</dbReference>
<dbReference type="SMART" id="SM00798">
    <property type="entry name" value="AICARFT_IMPCHas"/>
    <property type="match status" value="1"/>
</dbReference>
<dbReference type="SMART" id="SM00851">
    <property type="entry name" value="MGS"/>
    <property type="match status" value="1"/>
</dbReference>
<dbReference type="SUPFAM" id="SSF53927">
    <property type="entry name" value="Cytidine deaminase-like"/>
    <property type="match status" value="1"/>
</dbReference>
<dbReference type="SUPFAM" id="SSF52335">
    <property type="entry name" value="Methylglyoxal synthase-like"/>
    <property type="match status" value="1"/>
</dbReference>
<dbReference type="PROSITE" id="PS51855">
    <property type="entry name" value="MGS"/>
    <property type="match status" value="1"/>
</dbReference>
<name>PUR9_PROA2</name>
<evidence type="ECO:0000255" key="1">
    <source>
        <dbReference type="HAMAP-Rule" id="MF_00139"/>
    </source>
</evidence>
<evidence type="ECO:0000255" key="2">
    <source>
        <dbReference type="PROSITE-ProRule" id="PRU01202"/>
    </source>
</evidence>
<protein>
    <recommendedName>
        <fullName evidence="1">Bifunctional purine biosynthesis protein PurH</fullName>
    </recommendedName>
    <domain>
        <recommendedName>
            <fullName evidence="1">Phosphoribosylaminoimidazolecarboxamide formyltransferase</fullName>
            <ecNumber evidence="1">2.1.2.3</ecNumber>
        </recommendedName>
        <alternativeName>
            <fullName evidence="1">AICAR transformylase</fullName>
        </alternativeName>
    </domain>
    <domain>
        <recommendedName>
            <fullName evidence="1">IMP cyclohydrolase</fullName>
            <ecNumber evidence="1">3.5.4.10</ecNumber>
        </recommendedName>
        <alternativeName>
            <fullName evidence="1">ATIC</fullName>
        </alternativeName>
        <alternativeName>
            <fullName evidence="1">IMP synthase</fullName>
        </alternativeName>
        <alternativeName>
            <fullName evidence="1">Inosinicase</fullName>
        </alternativeName>
    </domain>
</protein>
<feature type="chain" id="PRO_1000096081" description="Bifunctional purine biosynthesis protein PurH">
    <location>
        <begin position="1"/>
        <end position="525"/>
    </location>
</feature>
<feature type="domain" description="MGS-like" evidence="2">
    <location>
        <begin position="1"/>
        <end position="149"/>
    </location>
</feature>
<keyword id="KW-0378">Hydrolase</keyword>
<keyword id="KW-0511">Multifunctional enzyme</keyword>
<keyword id="KW-0658">Purine biosynthesis</keyword>
<keyword id="KW-0808">Transferase</keyword>
<sequence>MSDPVIKRALVSVSDKTGIVDFCRELGAMGVEIFSTGGTLRILQESGIEAASISTITGFPEIMDGRVKTLHPKIHGGLLAVRDNEDHVGQAKANGIEFIDMVVVNLYPFEATVAKPDVTFEEAIENIDIGGPSMLRSAAKNNESVTVVTDSADYATVLDEMRSNNGATRRETRLTLARKVFELTSRYDRAIADYLIGAEESGETEAPAAISVKLEKELDMRYGENPHQSAGFYRLVDGQGSRCFDDFFDKLHGKELSYNNMLDIAAATGLVEEFRGEDPAVVIIKHTNPCGVAQAGTLVDAYRKAFSTDTQSPFGGIIAFNVPLDMETALAVDEIFTEILIAPAYEDGVLDMLMKKKNRRLVLQKKALLQEVMEYKSTQFGMLVQDRDSKIVSREDLKVVTKRQPDEQELDDMMFAWKIAKHVKSNTIVYVKNGQTIGVGAGQMSRIDSAKIARSKAAEAGLDIKGSAVASDAFFPFADGLLAAAEAGATSVIQPGGSIRDDEVIAAADENNLAMVFTSMRHFKH</sequence>
<proteinExistence type="inferred from homology"/>